<feature type="chain" id="PRO_0000095111" description="Tricorn protease-interacting factor F2">
    <location>
        <begin position="1"/>
        <end position="783"/>
    </location>
</feature>
<feature type="active site" description="Proton acceptor" evidence="2">
    <location>
        <position position="272"/>
    </location>
</feature>
<feature type="binding site" evidence="1">
    <location>
        <position position="107"/>
    </location>
    <ligand>
        <name>substrate</name>
    </ligand>
</feature>
<feature type="binding site" evidence="1">
    <location>
        <begin position="236"/>
        <end position="240"/>
    </location>
    <ligand>
        <name>substrate</name>
    </ligand>
</feature>
<feature type="binding site" evidence="2">
    <location>
        <position position="271"/>
    </location>
    <ligand>
        <name>Zn(2+)</name>
        <dbReference type="ChEBI" id="CHEBI:29105"/>
        <note>catalytic</note>
    </ligand>
</feature>
<feature type="binding site" evidence="2">
    <location>
        <position position="275"/>
    </location>
    <ligand>
        <name>Zn(2+)</name>
        <dbReference type="ChEBI" id="CHEBI:29105"/>
        <note>catalytic</note>
    </ligand>
</feature>
<feature type="binding site" evidence="2">
    <location>
        <position position="294"/>
    </location>
    <ligand>
        <name>Zn(2+)</name>
        <dbReference type="ChEBI" id="CHEBI:29105"/>
        <note>catalytic</note>
    </ligand>
</feature>
<feature type="site" description="Transition state stabilizer" evidence="1">
    <location>
        <position position="357"/>
    </location>
</feature>
<accession>Q978U3</accession>
<keyword id="KW-0031">Aminopeptidase</keyword>
<keyword id="KW-0963">Cytoplasm</keyword>
<keyword id="KW-0378">Hydrolase</keyword>
<keyword id="KW-0479">Metal-binding</keyword>
<keyword id="KW-0482">Metalloprotease</keyword>
<keyword id="KW-0645">Protease</keyword>
<keyword id="KW-0862">Zinc</keyword>
<organism>
    <name type="scientific">Thermoplasma volcanium (strain ATCC 51530 / DSM 4299 / JCM 9571 / NBRC 15438 / GSS1)</name>
    <dbReference type="NCBI Taxonomy" id="273116"/>
    <lineage>
        <taxon>Archaea</taxon>
        <taxon>Methanobacteriati</taxon>
        <taxon>Thermoplasmatota</taxon>
        <taxon>Thermoplasmata</taxon>
        <taxon>Thermoplasmatales</taxon>
        <taxon>Thermoplasmataceae</taxon>
        <taxon>Thermoplasma</taxon>
    </lineage>
</organism>
<sequence length="783" mass="88980">MDFSIEEYDLTFDFDLSEFTYRGKEKIKLSGEANELVLDSVRLSIDSVKLNGSAVDFDVNDKALRIESRIKSGDVVDIDFHAKVSDTLMGLYLSKTREGTMITTQFESTGARMAFPCIDHPAYKAVFSITLVIDKDYDAISNMPVKKVETSDRKIVEFEKTPRMSTYLLYIGVGKFKYASERYKDREIILASLKDIKSKYPIDIAKRSIEFYEGYFGIPYALPKMHLISVPEFGAGAMENWGAITFREIALMATEDSGSLMKQNAAITIAHEIAHQWFGDLVTMKWWNDLWLNESFATFMSYKTVDSFSKQWDVFSDFIKSETGGALRSDSLKNTHPIEVDVKDPDEISQIFDEISYGKGASILRMIEDYVGAEDFRKGISKYLKEHAYGNAEGSDLWNAIETESGKPVNRIMEAWITKAGYPVLKVNKDGNRIRLTQEQFYLDGTSGNTEWPIPLTIITKKGKVSMLMEDEVYIDEMLKLNANNSGFYRVMYDNDTFNTVISSLDKFSNLDKWGLLNDMYAFLVSGRLSVNEYVERIKNFLNDEDHLVVEEIASQLTSLYLIKPSSQVVYQLAKDYLRNQVQRLGTKKKGEDDKISKLRGIVYQDLVTVDEDFAKELSPQFASLSEDPDLALAKAVAKARTDGLNELIDAANKYTDDEIRVRVIAAMGWCSKDQLSTIFSLIDNGTIKKQDMLYVFSFVVTNPSGRDFFFQNIDKIVSLMEHAFEGTGYTSRILEGSIPYIGLEKYEEIKAKASQIRSPSYNVGIDKGLETLEIIRKLYNKL</sequence>
<protein>
    <recommendedName>
        <fullName>Tricorn protease-interacting factor F2</fullName>
        <ecNumber>3.4.11.-</ecNumber>
    </recommendedName>
</protein>
<evidence type="ECO:0000250" key="1"/>
<evidence type="ECO:0000255" key="2">
    <source>
        <dbReference type="PROSITE-ProRule" id="PRU10095"/>
    </source>
</evidence>
<evidence type="ECO:0000305" key="3"/>
<reference key="1">
    <citation type="journal article" date="2000" name="Proc. Natl. Acad. Sci. U.S.A.">
        <title>Archaeal adaptation to higher temperatures revealed by genomic sequence of Thermoplasma volcanium.</title>
        <authorList>
            <person name="Kawashima T."/>
            <person name="Amano N."/>
            <person name="Koike H."/>
            <person name="Makino S."/>
            <person name="Higuchi S."/>
            <person name="Kawashima-Ohya Y."/>
            <person name="Watanabe K."/>
            <person name="Yamazaki M."/>
            <person name="Kanehori K."/>
            <person name="Kawamoto T."/>
            <person name="Nunoshiba T."/>
            <person name="Yamamoto Y."/>
            <person name="Aramaki H."/>
            <person name="Makino K."/>
            <person name="Suzuki M."/>
        </authorList>
    </citation>
    <scope>NUCLEOTIDE SEQUENCE [LARGE SCALE GENOMIC DNA]</scope>
    <source>
        <strain>ATCC 51530 / DSM 4299 / JCM 9571 / NBRC 15438 / GSS1</strain>
    </source>
</reference>
<comment type="function">
    <text evidence="1">Proteases F1, F2 and F3 degrade oligopeptides produced by Tricorn (themselves probably produced by the proteasome), yielding free amino acids.</text>
</comment>
<comment type="cofactor">
    <cofactor evidence="1">
        <name>Zn(2+)</name>
        <dbReference type="ChEBI" id="CHEBI:29105"/>
    </cofactor>
    <text evidence="1">Binds 1 zinc ion per subunit.</text>
</comment>
<comment type="subunit">
    <text evidence="1">Monomer. Part of the Tricorn proteolytic complex (By similarity).</text>
</comment>
<comment type="subcellular location">
    <subcellularLocation>
        <location evidence="1">Cytoplasm</location>
    </subcellularLocation>
</comment>
<comment type="similarity">
    <text evidence="3">Belongs to the peptidase M1 family.</text>
</comment>
<gene>
    <name type="primary">trf2</name>
    <name type="ordered locus">TV1322</name>
    <name type="ORF">TVG1363786</name>
</gene>
<dbReference type="EC" id="3.4.11.-"/>
<dbReference type="EMBL" id="BA000011">
    <property type="protein sequence ID" value="BAB60464.1"/>
    <property type="molecule type" value="Genomic_DNA"/>
</dbReference>
<dbReference type="RefSeq" id="WP_010917557.1">
    <property type="nucleotide sequence ID" value="NC_002689.2"/>
</dbReference>
<dbReference type="SMR" id="Q978U3"/>
<dbReference type="STRING" id="273116.gene:9382130"/>
<dbReference type="MEROPS" id="M01.020"/>
<dbReference type="PaxDb" id="273116-14325561"/>
<dbReference type="GeneID" id="1441439"/>
<dbReference type="KEGG" id="tvo:TVG1363786"/>
<dbReference type="eggNOG" id="arCOG02969">
    <property type="taxonomic scope" value="Archaea"/>
</dbReference>
<dbReference type="HOGENOM" id="CLU_003705_0_1_2"/>
<dbReference type="OrthoDB" id="139771at2157"/>
<dbReference type="PhylomeDB" id="Q978U3"/>
<dbReference type="Proteomes" id="UP000001017">
    <property type="component" value="Chromosome"/>
</dbReference>
<dbReference type="GO" id="GO:0005737">
    <property type="term" value="C:cytoplasm"/>
    <property type="evidence" value="ECO:0007669"/>
    <property type="project" value="UniProtKB-SubCell"/>
</dbReference>
<dbReference type="GO" id="GO:0005615">
    <property type="term" value="C:extracellular space"/>
    <property type="evidence" value="ECO:0007669"/>
    <property type="project" value="TreeGrafter"/>
</dbReference>
<dbReference type="GO" id="GO:0016020">
    <property type="term" value="C:membrane"/>
    <property type="evidence" value="ECO:0007669"/>
    <property type="project" value="TreeGrafter"/>
</dbReference>
<dbReference type="GO" id="GO:0070006">
    <property type="term" value="F:metalloaminopeptidase activity"/>
    <property type="evidence" value="ECO:0007669"/>
    <property type="project" value="TreeGrafter"/>
</dbReference>
<dbReference type="GO" id="GO:0042277">
    <property type="term" value="F:peptide binding"/>
    <property type="evidence" value="ECO:0007669"/>
    <property type="project" value="TreeGrafter"/>
</dbReference>
<dbReference type="GO" id="GO:0008270">
    <property type="term" value="F:zinc ion binding"/>
    <property type="evidence" value="ECO:0007669"/>
    <property type="project" value="InterPro"/>
</dbReference>
<dbReference type="GO" id="GO:0043171">
    <property type="term" value="P:peptide catabolic process"/>
    <property type="evidence" value="ECO:0007669"/>
    <property type="project" value="TreeGrafter"/>
</dbReference>
<dbReference type="GO" id="GO:0006508">
    <property type="term" value="P:proteolysis"/>
    <property type="evidence" value="ECO:0007669"/>
    <property type="project" value="UniProtKB-KW"/>
</dbReference>
<dbReference type="CDD" id="cd09601">
    <property type="entry name" value="M1_APN-Q_like"/>
    <property type="match status" value="1"/>
</dbReference>
<dbReference type="FunFam" id="1.10.390.10:FF:000006">
    <property type="entry name" value="Puromycin-sensitive aminopeptidase"/>
    <property type="match status" value="1"/>
</dbReference>
<dbReference type="Gene3D" id="1.25.50.20">
    <property type="match status" value="1"/>
</dbReference>
<dbReference type="Gene3D" id="2.60.40.1910">
    <property type="match status" value="1"/>
</dbReference>
<dbReference type="Gene3D" id="1.10.390.10">
    <property type="entry name" value="Neutral Protease Domain 2"/>
    <property type="match status" value="1"/>
</dbReference>
<dbReference type="Gene3D" id="2.60.40.1730">
    <property type="entry name" value="tricorn interacting facor f3 domain"/>
    <property type="match status" value="1"/>
</dbReference>
<dbReference type="InterPro" id="IPR045357">
    <property type="entry name" value="Aminopeptidase_N-like_N"/>
</dbReference>
<dbReference type="InterPro" id="IPR042097">
    <property type="entry name" value="Aminopeptidase_N-like_N_sf"/>
</dbReference>
<dbReference type="InterPro" id="IPR024571">
    <property type="entry name" value="ERAP1-like_C_dom"/>
</dbReference>
<dbReference type="InterPro" id="IPR034016">
    <property type="entry name" value="M1_APN-typ"/>
</dbReference>
<dbReference type="InterPro" id="IPR001930">
    <property type="entry name" value="Peptidase_M1"/>
</dbReference>
<dbReference type="InterPro" id="IPR050344">
    <property type="entry name" value="Peptidase_M1_aminopeptidases"/>
</dbReference>
<dbReference type="InterPro" id="IPR014782">
    <property type="entry name" value="Peptidase_M1_dom"/>
</dbReference>
<dbReference type="InterPro" id="IPR027268">
    <property type="entry name" value="Peptidase_M4/M1_CTD_sf"/>
</dbReference>
<dbReference type="PANTHER" id="PTHR11533">
    <property type="entry name" value="PROTEASE M1 ZINC METALLOPROTEASE"/>
    <property type="match status" value="1"/>
</dbReference>
<dbReference type="PANTHER" id="PTHR11533:SF174">
    <property type="entry name" value="PUROMYCIN-SENSITIVE AMINOPEPTIDASE-RELATED"/>
    <property type="match status" value="1"/>
</dbReference>
<dbReference type="Pfam" id="PF11838">
    <property type="entry name" value="ERAP1_C"/>
    <property type="match status" value="1"/>
</dbReference>
<dbReference type="Pfam" id="PF01433">
    <property type="entry name" value="Peptidase_M1"/>
    <property type="match status" value="1"/>
</dbReference>
<dbReference type="Pfam" id="PF17900">
    <property type="entry name" value="Peptidase_M1_N"/>
    <property type="match status" value="1"/>
</dbReference>
<dbReference type="PRINTS" id="PR00756">
    <property type="entry name" value="ALADIPTASE"/>
</dbReference>
<dbReference type="SUPFAM" id="SSF63737">
    <property type="entry name" value="Leukotriene A4 hydrolase N-terminal domain"/>
    <property type="match status" value="1"/>
</dbReference>
<dbReference type="SUPFAM" id="SSF55486">
    <property type="entry name" value="Metalloproteases ('zincins'), catalytic domain"/>
    <property type="match status" value="1"/>
</dbReference>
<dbReference type="PROSITE" id="PS00142">
    <property type="entry name" value="ZINC_PROTEASE"/>
    <property type="match status" value="1"/>
</dbReference>
<name>TRF2_THEVO</name>
<proteinExistence type="inferred from homology"/>